<organism>
    <name type="scientific">Listeria monocytogenes serotype 4b (strain F2365)</name>
    <dbReference type="NCBI Taxonomy" id="265669"/>
    <lineage>
        <taxon>Bacteria</taxon>
        <taxon>Bacillati</taxon>
        <taxon>Bacillota</taxon>
        <taxon>Bacilli</taxon>
        <taxon>Bacillales</taxon>
        <taxon>Listeriaceae</taxon>
        <taxon>Listeria</taxon>
    </lineage>
</organism>
<evidence type="ECO:0000250" key="1"/>
<evidence type="ECO:0000255" key="2">
    <source>
        <dbReference type="HAMAP-Rule" id="MF_00047"/>
    </source>
</evidence>
<feature type="chain" id="PRO_0000177838" description="D-alanine--D-alanine ligase">
    <location>
        <begin position="1"/>
        <end position="370"/>
    </location>
</feature>
<feature type="domain" description="ATP-grasp" evidence="2">
    <location>
        <begin position="144"/>
        <end position="352"/>
    </location>
</feature>
<feature type="binding site" evidence="2">
    <location>
        <begin position="177"/>
        <end position="232"/>
    </location>
    <ligand>
        <name>ATP</name>
        <dbReference type="ChEBI" id="CHEBI:30616"/>
    </ligand>
</feature>
<feature type="binding site" evidence="2">
    <location>
        <position position="306"/>
    </location>
    <ligand>
        <name>Mg(2+)</name>
        <dbReference type="ChEBI" id="CHEBI:18420"/>
        <label>1</label>
    </ligand>
</feature>
<feature type="binding site" evidence="2">
    <location>
        <position position="319"/>
    </location>
    <ligand>
        <name>Mg(2+)</name>
        <dbReference type="ChEBI" id="CHEBI:18420"/>
        <label>1</label>
    </ligand>
</feature>
<feature type="binding site" evidence="2">
    <location>
        <position position="319"/>
    </location>
    <ligand>
        <name>Mg(2+)</name>
        <dbReference type="ChEBI" id="CHEBI:18420"/>
        <label>2</label>
    </ligand>
</feature>
<feature type="binding site" evidence="2">
    <location>
        <position position="321"/>
    </location>
    <ligand>
        <name>Mg(2+)</name>
        <dbReference type="ChEBI" id="CHEBI:18420"/>
        <label>2</label>
    </ligand>
</feature>
<accession>Q721W2</accession>
<protein>
    <recommendedName>
        <fullName evidence="2">D-alanine--D-alanine ligase</fullName>
        <ecNumber evidence="2">6.3.2.4</ecNumber>
    </recommendedName>
    <alternativeName>
        <fullName evidence="2">D-Ala-D-Ala ligase</fullName>
    </alternativeName>
    <alternativeName>
        <fullName evidence="2">D-alanylalanine synthetase</fullName>
    </alternativeName>
</protein>
<dbReference type="EC" id="6.3.2.4" evidence="2"/>
<dbReference type="EMBL" id="AE017262">
    <property type="protein sequence ID" value="AAT03652.1"/>
    <property type="molecule type" value="Genomic_DNA"/>
</dbReference>
<dbReference type="RefSeq" id="WP_003724785.1">
    <property type="nucleotide sequence ID" value="NC_002973.6"/>
</dbReference>
<dbReference type="SMR" id="Q721W2"/>
<dbReference type="KEGG" id="lmf:LMOf2365_0872"/>
<dbReference type="HOGENOM" id="CLU_039268_0_0_9"/>
<dbReference type="UniPathway" id="UPA00219"/>
<dbReference type="GO" id="GO:0005829">
    <property type="term" value="C:cytosol"/>
    <property type="evidence" value="ECO:0007669"/>
    <property type="project" value="TreeGrafter"/>
</dbReference>
<dbReference type="GO" id="GO:0005524">
    <property type="term" value="F:ATP binding"/>
    <property type="evidence" value="ECO:0007669"/>
    <property type="project" value="UniProtKB-KW"/>
</dbReference>
<dbReference type="GO" id="GO:0008716">
    <property type="term" value="F:D-alanine-D-alanine ligase activity"/>
    <property type="evidence" value="ECO:0007669"/>
    <property type="project" value="UniProtKB-UniRule"/>
</dbReference>
<dbReference type="GO" id="GO:0046872">
    <property type="term" value="F:metal ion binding"/>
    <property type="evidence" value="ECO:0007669"/>
    <property type="project" value="UniProtKB-KW"/>
</dbReference>
<dbReference type="GO" id="GO:0071555">
    <property type="term" value="P:cell wall organization"/>
    <property type="evidence" value="ECO:0007669"/>
    <property type="project" value="UniProtKB-KW"/>
</dbReference>
<dbReference type="GO" id="GO:0009252">
    <property type="term" value="P:peptidoglycan biosynthetic process"/>
    <property type="evidence" value="ECO:0007669"/>
    <property type="project" value="UniProtKB-UniRule"/>
</dbReference>
<dbReference type="GO" id="GO:0008360">
    <property type="term" value="P:regulation of cell shape"/>
    <property type="evidence" value="ECO:0007669"/>
    <property type="project" value="UniProtKB-KW"/>
</dbReference>
<dbReference type="FunFam" id="3.30.1490.20:FF:000007">
    <property type="entry name" value="D-alanine--D-alanine ligase"/>
    <property type="match status" value="1"/>
</dbReference>
<dbReference type="FunFam" id="3.30.470.20:FF:000008">
    <property type="entry name" value="D-alanine--D-alanine ligase"/>
    <property type="match status" value="1"/>
</dbReference>
<dbReference type="FunFam" id="3.40.50.20:FF:000020">
    <property type="entry name" value="D-alanine--D-alanine ligase"/>
    <property type="match status" value="1"/>
</dbReference>
<dbReference type="Gene3D" id="3.40.50.20">
    <property type="match status" value="1"/>
</dbReference>
<dbReference type="Gene3D" id="3.30.1490.20">
    <property type="entry name" value="ATP-grasp fold, A domain"/>
    <property type="match status" value="1"/>
</dbReference>
<dbReference type="Gene3D" id="3.30.470.20">
    <property type="entry name" value="ATP-grasp fold, B domain"/>
    <property type="match status" value="1"/>
</dbReference>
<dbReference type="HAMAP" id="MF_00047">
    <property type="entry name" value="Dala_Dala_lig"/>
    <property type="match status" value="1"/>
</dbReference>
<dbReference type="InterPro" id="IPR011761">
    <property type="entry name" value="ATP-grasp"/>
</dbReference>
<dbReference type="InterPro" id="IPR013815">
    <property type="entry name" value="ATP_grasp_subdomain_1"/>
</dbReference>
<dbReference type="InterPro" id="IPR000291">
    <property type="entry name" value="D-Ala_lig_Van_CS"/>
</dbReference>
<dbReference type="InterPro" id="IPR005905">
    <property type="entry name" value="D_ala_D_ala"/>
</dbReference>
<dbReference type="InterPro" id="IPR011095">
    <property type="entry name" value="Dala_Dala_lig_C"/>
</dbReference>
<dbReference type="InterPro" id="IPR011127">
    <property type="entry name" value="Dala_Dala_lig_N"/>
</dbReference>
<dbReference type="InterPro" id="IPR016185">
    <property type="entry name" value="PreATP-grasp_dom_sf"/>
</dbReference>
<dbReference type="NCBIfam" id="TIGR01205">
    <property type="entry name" value="D_ala_D_alaTIGR"/>
    <property type="match status" value="1"/>
</dbReference>
<dbReference type="NCBIfam" id="NF002526">
    <property type="entry name" value="PRK01966.1-2"/>
    <property type="match status" value="1"/>
</dbReference>
<dbReference type="NCBIfam" id="NF002528">
    <property type="entry name" value="PRK01966.1-4"/>
    <property type="match status" value="1"/>
</dbReference>
<dbReference type="PANTHER" id="PTHR23132">
    <property type="entry name" value="D-ALANINE--D-ALANINE LIGASE"/>
    <property type="match status" value="1"/>
</dbReference>
<dbReference type="PANTHER" id="PTHR23132:SF25">
    <property type="entry name" value="D-ALANINE--D-ALANINE LIGASE A"/>
    <property type="match status" value="1"/>
</dbReference>
<dbReference type="Pfam" id="PF07478">
    <property type="entry name" value="Dala_Dala_lig_C"/>
    <property type="match status" value="1"/>
</dbReference>
<dbReference type="Pfam" id="PF01820">
    <property type="entry name" value="Dala_Dala_lig_N"/>
    <property type="match status" value="1"/>
</dbReference>
<dbReference type="PIRSF" id="PIRSF039102">
    <property type="entry name" value="Ddl/VanB"/>
    <property type="match status" value="1"/>
</dbReference>
<dbReference type="SUPFAM" id="SSF56059">
    <property type="entry name" value="Glutathione synthetase ATP-binding domain-like"/>
    <property type="match status" value="1"/>
</dbReference>
<dbReference type="SUPFAM" id="SSF52440">
    <property type="entry name" value="PreATP-grasp domain"/>
    <property type="match status" value="1"/>
</dbReference>
<dbReference type="PROSITE" id="PS50975">
    <property type="entry name" value="ATP_GRASP"/>
    <property type="match status" value="1"/>
</dbReference>
<dbReference type="PROSITE" id="PS00843">
    <property type="entry name" value="DALA_DALA_LIGASE_1"/>
    <property type="match status" value="1"/>
</dbReference>
<dbReference type="PROSITE" id="PS00844">
    <property type="entry name" value="DALA_DALA_LIGASE_2"/>
    <property type="match status" value="1"/>
</dbReference>
<comment type="function">
    <text evidence="2">Cell wall formation.</text>
</comment>
<comment type="catalytic activity">
    <reaction evidence="2">
        <text>2 D-alanine + ATP = D-alanyl-D-alanine + ADP + phosphate + H(+)</text>
        <dbReference type="Rhea" id="RHEA:11224"/>
        <dbReference type="ChEBI" id="CHEBI:15378"/>
        <dbReference type="ChEBI" id="CHEBI:30616"/>
        <dbReference type="ChEBI" id="CHEBI:43474"/>
        <dbReference type="ChEBI" id="CHEBI:57416"/>
        <dbReference type="ChEBI" id="CHEBI:57822"/>
        <dbReference type="ChEBI" id="CHEBI:456216"/>
        <dbReference type="EC" id="6.3.2.4"/>
    </reaction>
</comment>
<comment type="cofactor">
    <cofactor evidence="1">
        <name>Mg(2+)</name>
        <dbReference type="ChEBI" id="CHEBI:18420"/>
    </cofactor>
    <cofactor evidence="1">
        <name>Mn(2+)</name>
        <dbReference type="ChEBI" id="CHEBI:29035"/>
    </cofactor>
    <text evidence="1">Binds 2 magnesium or manganese ions per subunit.</text>
</comment>
<comment type="pathway">
    <text evidence="2">Cell wall biogenesis; peptidoglycan biosynthesis.</text>
</comment>
<comment type="subcellular location">
    <subcellularLocation>
        <location evidence="2">Cytoplasm</location>
    </subcellularLocation>
</comment>
<comment type="similarity">
    <text evidence="2">Belongs to the D-alanine--D-alanine ligase family.</text>
</comment>
<sequence length="370" mass="40569">MKTKLILLYGGKSAEHEVSLQTAFSVINALDLEKFEAAPIYITNEGEWIQGPLLSGKLDFVEQLRFSATDTIKLATTESEKSEGEAISPAVLEADGQETVVFPLLHGPNGEDGTVQGLFEVLNIPYVGNGVLASSAAMDKIVMKKIFADAGIPQVPAVAVRLIDWKNYQAEMVAEMEEVLTYPVFVKPANLGSSVGISKATNKKELADAMTEAFLYDRRVVVEQGVVAREIEMGVLGNDTPVCSVPGEILPEGAVATFYDYKAKYQDNNTALIIPTEVDPEILEQMKEYAVQAFLGLDASGLVRADFFLTEDNQLFLNEVNTMPGFTPYSMYPLLWQETGLPYGALIERLVDLAKERHAAKNALKYKLED</sequence>
<gene>
    <name evidence="2" type="primary">ddl</name>
    <name type="ordered locus">LMOf2365_0872</name>
</gene>
<name>DDL_LISMF</name>
<keyword id="KW-0067">ATP-binding</keyword>
<keyword id="KW-0133">Cell shape</keyword>
<keyword id="KW-0961">Cell wall biogenesis/degradation</keyword>
<keyword id="KW-0963">Cytoplasm</keyword>
<keyword id="KW-0436">Ligase</keyword>
<keyword id="KW-0460">Magnesium</keyword>
<keyword id="KW-0464">Manganese</keyword>
<keyword id="KW-0479">Metal-binding</keyword>
<keyword id="KW-0547">Nucleotide-binding</keyword>
<keyword id="KW-0573">Peptidoglycan synthesis</keyword>
<proteinExistence type="inferred from homology"/>
<reference key="1">
    <citation type="journal article" date="2004" name="Nucleic Acids Res.">
        <title>Whole genome comparisons of serotype 4b and 1/2a strains of the food-borne pathogen Listeria monocytogenes reveal new insights into the core genome components of this species.</title>
        <authorList>
            <person name="Nelson K.E."/>
            <person name="Fouts D.E."/>
            <person name="Mongodin E.F."/>
            <person name="Ravel J."/>
            <person name="DeBoy R.T."/>
            <person name="Kolonay J.F."/>
            <person name="Rasko D.A."/>
            <person name="Angiuoli S.V."/>
            <person name="Gill S.R."/>
            <person name="Paulsen I.T."/>
            <person name="Peterson J.D."/>
            <person name="White O."/>
            <person name="Nelson W.C."/>
            <person name="Nierman W.C."/>
            <person name="Beanan M.J."/>
            <person name="Brinkac L.M."/>
            <person name="Daugherty S.C."/>
            <person name="Dodson R.J."/>
            <person name="Durkin A.S."/>
            <person name="Madupu R."/>
            <person name="Haft D.H."/>
            <person name="Selengut J."/>
            <person name="Van Aken S.E."/>
            <person name="Khouri H.M."/>
            <person name="Fedorova N."/>
            <person name="Forberger H.A."/>
            <person name="Tran B."/>
            <person name="Kathariou S."/>
            <person name="Wonderling L.D."/>
            <person name="Uhlich G.A."/>
            <person name="Bayles D.O."/>
            <person name="Luchansky J.B."/>
            <person name="Fraser C.M."/>
        </authorList>
    </citation>
    <scope>NUCLEOTIDE SEQUENCE [LARGE SCALE GENOMIC DNA]</scope>
    <source>
        <strain>F2365</strain>
    </source>
</reference>